<protein>
    <recommendedName>
        <fullName>Protein SprT</fullName>
    </recommendedName>
</protein>
<proteinExistence type="inferred from homology"/>
<sequence length="165" mass="19335">MKTSRLPIAIQQAVMRRLREKLAQANLKLGRNYPEPKLSYTQRGTSAGTAWLESYEIRLNPVLLLENSEAFIEEVVPHELAHLLVWKHFGRVAPHGKEWKWMMESVLGVPARRTHQFELQSVRRNTFPYRCKCQEHQLTVRRHNRVVRGEAIYRCVHCGEQLVAK</sequence>
<evidence type="ECO:0000255" key="1"/>
<evidence type="ECO:0000305" key="2"/>
<dbReference type="EMBL" id="AE005674">
    <property type="protein sequence ID" value="AAN44416.1"/>
    <property type="molecule type" value="Genomic_DNA"/>
</dbReference>
<dbReference type="EMBL" id="AE014073">
    <property type="protein sequence ID" value="AAP18241.1"/>
    <property type="molecule type" value="Genomic_DNA"/>
</dbReference>
<dbReference type="RefSeq" id="NP_708709.1">
    <property type="nucleotide sequence ID" value="NC_004337.2"/>
</dbReference>
<dbReference type="RefSeq" id="WP_005051770.1">
    <property type="nucleotide sequence ID" value="NZ_WPGW01000085.1"/>
</dbReference>
<dbReference type="RefSeq" id="WP_011069503.1">
    <property type="nucleotide sequence ID" value="NZ_CP123365.1"/>
</dbReference>
<dbReference type="STRING" id="198214.SF2935"/>
<dbReference type="PaxDb" id="198214-SF2935"/>
<dbReference type="GeneID" id="1025996"/>
<dbReference type="KEGG" id="sfl:SF2935"/>
<dbReference type="KEGG" id="sfx:S3139"/>
<dbReference type="PATRIC" id="fig|198214.7.peg.3492"/>
<dbReference type="HOGENOM" id="CLU_113336_0_1_6"/>
<dbReference type="Proteomes" id="UP000001006">
    <property type="component" value="Chromosome"/>
</dbReference>
<dbReference type="Proteomes" id="UP000002673">
    <property type="component" value="Chromosome"/>
</dbReference>
<dbReference type="GO" id="GO:0005737">
    <property type="term" value="C:cytoplasm"/>
    <property type="evidence" value="ECO:0007669"/>
    <property type="project" value="UniProtKB-SubCell"/>
</dbReference>
<dbReference type="GO" id="GO:0008270">
    <property type="term" value="F:zinc ion binding"/>
    <property type="evidence" value="ECO:0007669"/>
    <property type="project" value="UniProtKB-UniRule"/>
</dbReference>
<dbReference type="GO" id="GO:0006950">
    <property type="term" value="P:response to stress"/>
    <property type="evidence" value="ECO:0007669"/>
    <property type="project" value="UniProtKB-ARBA"/>
</dbReference>
<dbReference type="Gene3D" id="3.30.2010.10">
    <property type="entry name" value="Metalloproteases ('zincins'), catalytic domain"/>
    <property type="match status" value="1"/>
</dbReference>
<dbReference type="HAMAP" id="MF_00746">
    <property type="entry name" value="SprT"/>
    <property type="match status" value="1"/>
</dbReference>
<dbReference type="InterPro" id="IPR006640">
    <property type="entry name" value="SprT-like_domain"/>
</dbReference>
<dbReference type="InterPro" id="IPR035240">
    <property type="entry name" value="SprT_Zn_ribbon"/>
</dbReference>
<dbReference type="InterPro" id="IPR023483">
    <property type="entry name" value="Uncharacterised_SprT"/>
</dbReference>
<dbReference type="NCBIfam" id="NF003421">
    <property type="entry name" value="PRK04860.1"/>
    <property type="match status" value="1"/>
</dbReference>
<dbReference type="PANTHER" id="PTHR38773">
    <property type="entry name" value="PROTEIN SPRT"/>
    <property type="match status" value="1"/>
</dbReference>
<dbReference type="PANTHER" id="PTHR38773:SF1">
    <property type="entry name" value="PROTEIN SPRT"/>
    <property type="match status" value="1"/>
</dbReference>
<dbReference type="Pfam" id="PF10263">
    <property type="entry name" value="SprT-like"/>
    <property type="match status" value="1"/>
</dbReference>
<dbReference type="Pfam" id="PF17283">
    <property type="entry name" value="Zn_ribbon_SprT"/>
    <property type="match status" value="1"/>
</dbReference>
<dbReference type="SMART" id="SM00731">
    <property type="entry name" value="SprT"/>
    <property type="match status" value="1"/>
</dbReference>
<dbReference type="PROSITE" id="PS00142">
    <property type="entry name" value="ZINC_PROTEASE"/>
    <property type="match status" value="1"/>
</dbReference>
<gene>
    <name type="primary">sprT</name>
    <name type="ordered locus">SF2935</name>
    <name type="ordered locus">S3139</name>
</gene>
<keyword id="KW-0963">Cytoplasm</keyword>
<keyword id="KW-0479">Metal-binding</keyword>
<keyword id="KW-1185">Reference proteome</keyword>
<keyword id="KW-0862">Zinc</keyword>
<organism>
    <name type="scientific">Shigella flexneri</name>
    <dbReference type="NCBI Taxonomy" id="623"/>
    <lineage>
        <taxon>Bacteria</taxon>
        <taxon>Pseudomonadati</taxon>
        <taxon>Pseudomonadota</taxon>
        <taxon>Gammaproteobacteria</taxon>
        <taxon>Enterobacterales</taxon>
        <taxon>Enterobacteriaceae</taxon>
        <taxon>Shigella</taxon>
    </lineage>
</organism>
<reference key="1">
    <citation type="journal article" date="2002" name="Nucleic Acids Res.">
        <title>Genome sequence of Shigella flexneri 2a: insights into pathogenicity through comparison with genomes of Escherichia coli K12 and O157.</title>
        <authorList>
            <person name="Jin Q."/>
            <person name="Yuan Z."/>
            <person name="Xu J."/>
            <person name="Wang Y."/>
            <person name="Shen Y."/>
            <person name="Lu W."/>
            <person name="Wang J."/>
            <person name="Liu H."/>
            <person name="Yang J."/>
            <person name="Yang F."/>
            <person name="Zhang X."/>
            <person name="Zhang J."/>
            <person name="Yang G."/>
            <person name="Wu H."/>
            <person name="Qu D."/>
            <person name="Dong J."/>
            <person name="Sun L."/>
            <person name="Xue Y."/>
            <person name="Zhao A."/>
            <person name="Gao Y."/>
            <person name="Zhu J."/>
            <person name="Kan B."/>
            <person name="Ding K."/>
            <person name="Chen S."/>
            <person name="Cheng H."/>
            <person name="Yao Z."/>
            <person name="He B."/>
            <person name="Chen R."/>
            <person name="Ma D."/>
            <person name="Qiang B."/>
            <person name="Wen Y."/>
            <person name="Hou Y."/>
            <person name="Yu J."/>
        </authorList>
    </citation>
    <scope>NUCLEOTIDE SEQUENCE [LARGE SCALE GENOMIC DNA]</scope>
    <source>
        <strain>301 / Serotype 2a</strain>
    </source>
</reference>
<reference key="2">
    <citation type="journal article" date="2003" name="Infect. Immun.">
        <title>Complete genome sequence and comparative genomics of Shigella flexneri serotype 2a strain 2457T.</title>
        <authorList>
            <person name="Wei J."/>
            <person name="Goldberg M.B."/>
            <person name="Burland V."/>
            <person name="Venkatesan M.M."/>
            <person name="Deng W."/>
            <person name="Fournier G."/>
            <person name="Mayhew G.F."/>
            <person name="Plunkett G. III"/>
            <person name="Rose D.J."/>
            <person name="Darling A."/>
            <person name="Mau B."/>
            <person name="Perna N.T."/>
            <person name="Payne S.M."/>
            <person name="Runyen-Janecky L.J."/>
            <person name="Zhou S."/>
            <person name="Schwartz D.C."/>
            <person name="Blattner F.R."/>
        </authorList>
    </citation>
    <scope>NUCLEOTIDE SEQUENCE [LARGE SCALE GENOMIC DNA]</scope>
    <source>
        <strain>ATCC 700930 / 2457T / Serotype 2a</strain>
    </source>
</reference>
<name>SPRT_SHIFL</name>
<accession>Q83JS6</accession>
<accession>Q7UBN4</accession>
<feature type="chain" id="PRO_0000213279" description="Protein SprT">
    <location>
        <begin position="1"/>
        <end position="165"/>
    </location>
</feature>
<feature type="domain" description="SprT-like">
    <location>
        <begin position="20"/>
        <end position="163"/>
    </location>
</feature>
<feature type="active site" evidence="1">
    <location>
        <position position="79"/>
    </location>
</feature>
<feature type="binding site" evidence="1">
    <location>
        <position position="78"/>
    </location>
    <ligand>
        <name>Zn(2+)</name>
        <dbReference type="ChEBI" id="CHEBI:29105"/>
    </ligand>
</feature>
<feature type="binding site" evidence="1">
    <location>
        <position position="82"/>
    </location>
    <ligand>
        <name>Zn(2+)</name>
        <dbReference type="ChEBI" id="CHEBI:29105"/>
    </ligand>
</feature>
<feature type="sequence conflict" description="In Ref. 1; AAN44416." evidence="2" ref="1">
    <original>T</original>
    <variation>I</variation>
    <location>
        <position position="3"/>
    </location>
</feature>
<comment type="cofactor">
    <cofactor evidence="2">
        <name>Zn(2+)</name>
        <dbReference type="ChEBI" id="CHEBI:29105"/>
    </cofactor>
    <text evidence="2">Binds 1 zinc ion.</text>
</comment>
<comment type="subcellular location">
    <subcellularLocation>
        <location evidence="2">Cytoplasm</location>
    </subcellularLocation>
</comment>
<comment type="similarity">
    <text evidence="2">Belongs to the SprT family.</text>
</comment>